<keyword id="KW-0961">Cell wall biogenesis/degradation</keyword>
<keyword id="KW-0256">Endoplasmic reticulum</keyword>
<keyword id="KW-0472">Membrane</keyword>
<keyword id="KW-0653">Protein transport</keyword>
<keyword id="KW-1185">Reference proteome</keyword>
<keyword id="KW-0812">Transmembrane</keyword>
<keyword id="KW-1133">Transmembrane helix</keyword>
<keyword id="KW-0813">Transport</keyword>
<proteinExistence type="inferred from homology"/>
<name>CHS7_EMENI</name>
<accession>Q5BEG1</accession>
<accession>C8VTN7</accession>
<protein>
    <recommendedName>
        <fullName>Chitin synthase export chaperone</fullName>
    </recommendedName>
</protein>
<feature type="chain" id="PRO_0000280577" description="Chitin synthase export chaperone">
    <location>
        <begin position="1"/>
        <end position="331"/>
    </location>
</feature>
<feature type="transmembrane region" description="Helical" evidence="2">
    <location>
        <begin position="52"/>
        <end position="72"/>
    </location>
</feature>
<feature type="transmembrane region" description="Helical" evidence="2">
    <location>
        <begin position="84"/>
        <end position="104"/>
    </location>
</feature>
<feature type="transmembrane region" description="Helical" evidence="2">
    <location>
        <begin position="113"/>
        <end position="133"/>
    </location>
</feature>
<feature type="transmembrane region" description="Helical" evidence="2">
    <location>
        <begin position="150"/>
        <end position="170"/>
    </location>
</feature>
<feature type="transmembrane region" description="Helical" evidence="2">
    <location>
        <begin position="184"/>
        <end position="204"/>
    </location>
</feature>
<feature type="transmembrane region" description="Helical" evidence="2">
    <location>
        <begin position="219"/>
        <end position="239"/>
    </location>
</feature>
<feature type="transmembrane region" description="Helical" evidence="2">
    <location>
        <begin position="249"/>
        <end position="269"/>
    </location>
</feature>
<dbReference type="EMBL" id="AACD01000016">
    <property type="protein sequence ID" value="EAA66187.1"/>
    <property type="molecule type" value="Genomic_DNA"/>
</dbReference>
<dbReference type="EMBL" id="BN001308">
    <property type="protein sequence ID" value="CBF88215.1"/>
    <property type="molecule type" value="Genomic_DNA"/>
</dbReference>
<dbReference type="RefSeq" id="XP_658673.1">
    <property type="nucleotide sequence ID" value="XM_653581.1"/>
</dbReference>
<dbReference type="FunCoup" id="Q5BEG1">
    <property type="interactions" value="56"/>
</dbReference>
<dbReference type="STRING" id="227321.Q5BEG1"/>
<dbReference type="EnsemblFungi" id="CBF88215">
    <property type="protein sequence ID" value="CBF88215"/>
    <property type="gene ID" value="ANIA_01069"/>
</dbReference>
<dbReference type="KEGG" id="ani:ANIA_01069"/>
<dbReference type="VEuPathDB" id="FungiDB:AN1069"/>
<dbReference type="eggNOG" id="ENOG502QRVH">
    <property type="taxonomic scope" value="Eukaryota"/>
</dbReference>
<dbReference type="HOGENOM" id="CLU_050424_1_1_1"/>
<dbReference type="InParanoid" id="Q5BEG1"/>
<dbReference type="OMA" id="TVWEVKD"/>
<dbReference type="OrthoDB" id="2189463at2759"/>
<dbReference type="Proteomes" id="UP000000560">
    <property type="component" value="Chromosome VIII"/>
</dbReference>
<dbReference type="GO" id="GO:0005789">
    <property type="term" value="C:endoplasmic reticulum membrane"/>
    <property type="evidence" value="ECO:0000318"/>
    <property type="project" value="GO_Central"/>
</dbReference>
<dbReference type="GO" id="GO:0051082">
    <property type="term" value="F:unfolded protein binding"/>
    <property type="evidence" value="ECO:0000318"/>
    <property type="project" value="GO_Central"/>
</dbReference>
<dbReference type="GO" id="GO:0071555">
    <property type="term" value="P:cell wall organization"/>
    <property type="evidence" value="ECO:0007669"/>
    <property type="project" value="UniProtKB-KW"/>
</dbReference>
<dbReference type="GO" id="GO:0006031">
    <property type="term" value="P:chitin biosynthetic process"/>
    <property type="evidence" value="ECO:0000318"/>
    <property type="project" value="GO_Central"/>
</dbReference>
<dbReference type="GO" id="GO:0006457">
    <property type="term" value="P:protein folding"/>
    <property type="evidence" value="ECO:0000318"/>
    <property type="project" value="GO_Central"/>
</dbReference>
<dbReference type="GO" id="GO:0015031">
    <property type="term" value="P:protein transport"/>
    <property type="evidence" value="ECO:0007669"/>
    <property type="project" value="UniProtKB-KW"/>
</dbReference>
<dbReference type="InterPro" id="IPR022057">
    <property type="entry name" value="Chs7"/>
</dbReference>
<dbReference type="PANTHER" id="PTHR35329">
    <property type="entry name" value="CHITIN SYNTHASE EXPORT CHAPERONE"/>
    <property type="match status" value="1"/>
</dbReference>
<dbReference type="PANTHER" id="PTHR35329:SF2">
    <property type="entry name" value="CHITIN SYNTHASE EXPORT CHAPERONE"/>
    <property type="match status" value="1"/>
</dbReference>
<dbReference type="Pfam" id="PF12271">
    <property type="entry name" value="Chs7"/>
    <property type="match status" value="1"/>
</dbReference>
<gene>
    <name type="primary">chs7</name>
    <name type="ORF">AN1069</name>
</gene>
<evidence type="ECO:0000250" key="1"/>
<evidence type="ECO:0000255" key="2"/>
<evidence type="ECO:0000305" key="3"/>
<reference key="1">
    <citation type="journal article" date="2005" name="Nature">
        <title>Sequencing of Aspergillus nidulans and comparative analysis with A. fumigatus and A. oryzae.</title>
        <authorList>
            <person name="Galagan J.E."/>
            <person name="Calvo S.E."/>
            <person name="Cuomo C."/>
            <person name="Ma L.-J."/>
            <person name="Wortman J.R."/>
            <person name="Batzoglou S."/>
            <person name="Lee S.-I."/>
            <person name="Bastuerkmen M."/>
            <person name="Spevak C.C."/>
            <person name="Clutterbuck J."/>
            <person name="Kapitonov V."/>
            <person name="Jurka J."/>
            <person name="Scazzocchio C."/>
            <person name="Farman M.L."/>
            <person name="Butler J."/>
            <person name="Purcell S."/>
            <person name="Harris S."/>
            <person name="Braus G.H."/>
            <person name="Draht O."/>
            <person name="Busch S."/>
            <person name="D'Enfert C."/>
            <person name="Bouchier C."/>
            <person name="Goldman G.H."/>
            <person name="Bell-Pedersen D."/>
            <person name="Griffiths-Jones S."/>
            <person name="Doonan J.H."/>
            <person name="Yu J."/>
            <person name="Vienken K."/>
            <person name="Pain A."/>
            <person name="Freitag M."/>
            <person name="Selker E.U."/>
            <person name="Archer D.B."/>
            <person name="Penalva M.A."/>
            <person name="Oakley B.R."/>
            <person name="Momany M."/>
            <person name="Tanaka T."/>
            <person name="Kumagai T."/>
            <person name="Asai K."/>
            <person name="Machida M."/>
            <person name="Nierman W.C."/>
            <person name="Denning D.W."/>
            <person name="Caddick M.X."/>
            <person name="Hynes M."/>
            <person name="Paoletti M."/>
            <person name="Fischer R."/>
            <person name="Miller B.L."/>
            <person name="Dyer P.S."/>
            <person name="Sachs M.S."/>
            <person name="Osmani S.A."/>
            <person name="Birren B.W."/>
        </authorList>
    </citation>
    <scope>NUCLEOTIDE SEQUENCE [LARGE SCALE GENOMIC DNA]</scope>
    <source>
        <strain>FGSC A4 / ATCC 38163 / CBS 112.46 / NRRL 194 / M139</strain>
    </source>
</reference>
<reference key="2">
    <citation type="journal article" date="2009" name="Fungal Genet. Biol.">
        <title>The 2008 update of the Aspergillus nidulans genome annotation: a community effort.</title>
        <authorList>
            <person name="Wortman J.R."/>
            <person name="Gilsenan J.M."/>
            <person name="Joardar V."/>
            <person name="Deegan J."/>
            <person name="Clutterbuck J."/>
            <person name="Andersen M.R."/>
            <person name="Archer D."/>
            <person name="Bencina M."/>
            <person name="Braus G."/>
            <person name="Coutinho P."/>
            <person name="von Dohren H."/>
            <person name="Doonan J."/>
            <person name="Driessen A.J."/>
            <person name="Durek P."/>
            <person name="Espeso E."/>
            <person name="Fekete E."/>
            <person name="Flipphi M."/>
            <person name="Estrada C.G."/>
            <person name="Geysens S."/>
            <person name="Goldman G."/>
            <person name="de Groot P.W."/>
            <person name="Hansen K."/>
            <person name="Harris S.D."/>
            <person name="Heinekamp T."/>
            <person name="Helmstaedt K."/>
            <person name="Henrissat B."/>
            <person name="Hofmann G."/>
            <person name="Homan T."/>
            <person name="Horio T."/>
            <person name="Horiuchi H."/>
            <person name="James S."/>
            <person name="Jones M."/>
            <person name="Karaffa L."/>
            <person name="Karanyi Z."/>
            <person name="Kato M."/>
            <person name="Keller N."/>
            <person name="Kelly D.E."/>
            <person name="Kiel J.A."/>
            <person name="Kim J.M."/>
            <person name="van der Klei I.J."/>
            <person name="Klis F.M."/>
            <person name="Kovalchuk A."/>
            <person name="Krasevec N."/>
            <person name="Kubicek C.P."/>
            <person name="Liu B."/>
            <person name="Maccabe A."/>
            <person name="Meyer V."/>
            <person name="Mirabito P."/>
            <person name="Miskei M."/>
            <person name="Mos M."/>
            <person name="Mullins J."/>
            <person name="Nelson D.R."/>
            <person name="Nielsen J."/>
            <person name="Oakley B.R."/>
            <person name="Osmani S.A."/>
            <person name="Pakula T."/>
            <person name="Paszewski A."/>
            <person name="Paulsen I."/>
            <person name="Pilsyk S."/>
            <person name="Pocsi I."/>
            <person name="Punt P.J."/>
            <person name="Ram A.F."/>
            <person name="Ren Q."/>
            <person name="Robellet X."/>
            <person name="Robson G."/>
            <person name="Seiboth B."/>
            <person name="van Solingen P."/>
            <person name="Specht T."/>
            <person name="Sun J."/>
            <person name="Taheri-Talesh N."/>
            <person name="Takeshita N."/>
            <person name="Ussery D."/>
            <person name="vanKuyk P.A."/>
            <person name="Visser H."/>
            <person name="van de Vondervoort P.J."/>
            <person name="de Vries R.P."/>
            <person name="Walton J."/>
            <person name="Xiang X."/>
            <person name="Xiong Y."/>
            <person name="Zeng A.P."/>
            <person name="Brandt B.W."/>
            <person name="Cornell M.J."/>
            <person name="van den Hondel C.A."/>
            <person name="Visser J."/>
            <person name="Oliver S.G."/>
            <person name="Turner G."/>
        </authorList>
    </citation>
    <scope>GENOME REANNOTATION</scope>
    <source>
        <strain>FGSC A4 / ATCC 38163 / CBS 112.46 / NRRL 194 / M139</strain>
    </source>
</reference>
<comment type="function">
    <text evidence="1">Chaperone required for the export of the chitin synthase chs3 from the endoplasmic reticulum.</text>
</comment>
<comment type="subunit">
    <text evidence="1">Interacts with chs3.</text>
</comment>
<comment type="subcellular location">
    <subcellularLocation>
        <location evidence="1">Endoplasmic reticulum membrane</location>
        <topology evidence="1">Multi-pass membrane protein</topology>
    </subcellularLocation>
</comment>
<comment type="similarity">
    <text evidence="3">Belongs to the CHS7 family.</text>
</comment>
<sequence length="331" mass="36776">MGFGDFDEICKKAALPLCSLVGPSSAISGSTGIIPNCYARNIELANTIIFEGAASFLHIIALGMTVIMILHIRSKFTAVGRKEIITFFYIYMALTVCSLVIDAGVVPPRSGPFPWFVAVQNGLTSALCTSLLVNGFVGFQLYEDGTALSVWLLRLTSTVMFAVSFLISILTFKSWGGLSPTNTLAMFIVLYIINAICIAVYLVMQLLLVLNTLEDRWPLGHIAFGLLVFIAGQVIMYAFGDVICDNVQHYLDGLFFATFCNLLAVMMVYKFWDYITKEDLEFSVGIKPNNWEIKELLPDEDRRTTVYQDTNSEYAGSMYHHRASTYNGHGY</sequence>
<organism>
    <name type="scientific">Emericella nidulans (strain FGSC A4 / ATCC 38163 / CBS 112.46 / NRRL 194 / M139)</name>
    <name type="common">Aspergillus nidulans</name>
    <dbReference type="NCBI Taxonomy" id="227321"/>
    <lineage>
        <taxon>Eukaryota</taxon>
        <taxon>Fungi</taxon>
        <taxon>Dikarya</taxon>
        <taxon>Ascomycota</taxon>
        <taxon>Pezizomycotina</taxon>
        <taxon>Eurotiomycetes</taxon>
        <taxon>Eurotiomycetidae</taxon>
        <taxon>Eurotiales</taxon>
        <taxon>Aspergillaceae</taxon>
        <taxon>Aspergillus</taxon>
        <taxon>Aspergillus subgen. Nidulantes</taxon>
    </lineage>
</organism>